<organism>
    <name type="scientific">Mycobacterium sp. (strain KMS)</name>
    <dbReference type="NCBI Taxonomy" id="189918"/>
    <lineage>
        <taxon>Bacteria</taxon>
        <taxon>Bacillati</taxon>
        <taxon>Actinomycetota</taxon>
        <taxon>Actinomycetes</taxon>
        <taxon>Mycobacteriales</taxon>
        <taxon>Mycobacteriaceae</taxon>
        <taxon>Mycobacterium</taxon>
    </lineage>
</organism>
<accession>A1UJP4</accession>
<comment type="function">
    <text evidence="1">Catalyzes the insertion of one atom of molecular oxygen into position 2 of the phenyl ring of 3-(3-hydroxyphenyl)propionate (3-HPP) and hydroxycinnamic acid (3HCI).</text>
</comment>
<comment type="catalytic activity">
    <reaction evidence="1">
        <text>3-(3-hydroxyphenyl)propanoate + NADH + O2 + H(+) = 3-(2,3-dihydroxyphenyl)propanoate + NAD(+) + H2O</text>
        <dbReference type="Rhea" id="RHEA:24785"/>
        <dbReference type="ChEBI" id="CHEBI:15377"/>
        <dbReference type="ChEBI" id="CHEBI:15378"/>
        <dbReference type="ChEBI" id="CHEBI:15379"/>
        <dbReference type="ChEBI" id="CHEBI:46951"/>
        <dbReference type="ChEBI" id="CHEBI:57277"/>
        <dbReference type="ChEBI" id="CHEBI:57540"/>
        <dbReference type="ChEBI" id="CHEBI:57945"/>
        <dbReference type="EC" id="1.14.13.127"/>
    </reaction>
</comment>
<comment type="catalytic activity">
    <reaction evidence="1">
        <text>(2E)-3-(3-hydroxyphenyl)prop-2-enoate + NADH + O2 + H(+) = (2E)-3-(2,3-dihydroxyphenyl)prop-2-enoate + NAD(+) + H2O</text>
        <dbReference type="Rhea" id="RHEA:27846"/>
        <dbReference type="ChEBI" id="CHEBI:15377"/>
        <dbReference type="ChEBI" id="CHEBI:15378"/>
        <dbReference type="ChEBI" id="CHEBI:15379"/>
        <dbReference type="ChEBI" id="CHEBI:47928"/>
        <dbReference type="ChEBI" id="CHEBI:57540"/>
        <dbReference type="ChEBI" id="CHEBI:57945"/>
        <dbReference type="ChEBI" id="CHEBI:58642"/>
        <dbReference type="EC" id="1.14.13.127"/>
    </reaction>
</comment>
<comment type="cofactor">
    <cofactor evidence="1">
        <name>FAD</name>
        <dbReference type="ChEBI" id="CHEBI:57692"/>
    </cofactor>
</comment>
<comment type="pathway">
    <text evidence="1">Aromatic compound metabolism; 3-phenylpropanoate degradation.</text>
</comment>
<comment type="similarity">
    <text evidence="1">Belongs to the PheA/TfdB FAD monooxygenase family.</text>
</comment>
<keyword id="KW-0058">Aromatic hydrocarbons catabolism</keyword>
<keyword id="KW-0274">FAD</keyword>
<keyword id="KW-0285">Flavoprotein</keyword>
<keyword id="KW-0520">NAD</keyword>
<keyword id="KW-0560">Oxidoreductase</keyword>
<evidence type="ECO:0000255" key="1">
    <source>
        <dbReference type="HAMAP-Rule" id="MF_01652"/>
    </source>
</evidence>
<dbReference type="EC" id="1.14.13.127" evidence="1"/>
<dbReference type="EMBL" id="CP000518">
    <property type="protein sequence ID" value="ABL93052.1"/>
    <property type="molecule type" value="Genomic_DNA"/>
</dbReference>
<dbReference type="SMR" id="A1UJP4"/>
<dbReference type="STRING" id="189918.Mkms_3859"/>
<dbReference type="KEGG" id="mkm:Mkms_3859"/>
<dbReference type="HOGENOM" id="CLU_009665_20_2_11"/>
<dbReference type="OrthoDB" id="8670884at2"/>
<dbReference type="UniPathway" id="UPA00714"/>
<dbReference type="GO" id="GO:0008688">
    <property type="term" value="F:3-(3-hydroxyphenyl)propionate hydroxylase activity"/>
    <property type="evidence" value="ECO:0007669"/>
    <property type="project" value="UniProtKB-UniRule"/>
</dbReference>
<dbReference type="GO" id="GO:0071949">
    <property type="term" value="F:FAD binding"/>
    <property type="evidence" value="ECO:0007669"/>
    <property type="project" value="InterPro"/>
</dbReference>
<dbReference type="GO" id="GO:0019622">
    <property type="term" value="P:3-(3-hydroxy)phenylpropionate catabolic process"/>
    <property type="evidence" value="ECO:0007669"/>
    <property type="project" value="UniProtKB-UniRule"/>
</dbReference>
<dbReference type="GO" id="GO:0019380">
    <property type="term" value="P:3-phenylpropionate catabolic process"/>
    <property type="evidence" value="ECO:0007669"/>
    <property type="project" value="UniProtKB-UniPathway"/>
</dbReference>
<dbReference type="Gene3D" id="3.30.70.2450">
    <property type="match status" value="1"/>
</dbReference>
<dbReference type="Gene3D" id="3.50.50.60">
    <property type="entry name" value="FAD/NAD(P)-binding domain"/>
    <property type="match status" value="1"/>
</dbReference>
<dbReference type="HAMAP" id="MF_01652">
    <property type="entry name" value="MhpA"/>
    <property type="match status" value="1"/>
</dbReference>
<dbReference type="InterPro" id="IPR023786">
    <property type="entry name" value="3-HPP/3HCI_hydroxylase"/>
</dbReference>
<dbReference type="InterPro" id="IPR002938">
    <property type="entry name" value="FAD-bd"/>
</dbReference>
<dbReference type="InterPro" id="IPR036188">
    <property type="entry name" value="FAD/NAD-bd_sf"/>
</dbReference>
<dbReference type="InterPro" id="IPR050631">
    <property type="entry name" value="PheA/TfdB_FAD_monoxygenase"/>
</dbReference>
<dbReference type="NCBIfam" id="NF004828">
    <property type="entry name" value="PRK06183.1-2"/>
    <property type="match status" value="1"/>
</dbReference>
<dbReference type="NCBIfam" id="NF004829">
    <property type="entry name" value="PRK06183.1-3"/>
    <property type="match status" value="1"/>
</dbReference>
<dbReference type="NCBIfam" id="NF004831">
    <property type="entry name" value="PRK06183.1-5"/>
    <property type="match status" value="1"/>
</dbReference>
<dbReference type="PANTHER" id="PTHR43476">
    <property type="entry name" value="3-(3-HYDROXY-PHENYL)PROPIONATE/3-HYDROXYCINNAMIC ACID HYDROXYLASE"/>
    <property type="match status" value="1"/>
</dbReference>
<dbReference type="PANTHER" id="PTHR43476:SF3">
    <property type="entry name" value="FAD-BINDING MONOOXYGENASE"/>
    <property type="match status" value="1"/>
</dbReference>
<dbReference type="Pfam" id="PF01494">
    <property type="entry name" value="FAD_binding_3"/>
    <property type="match status" value="1"/>
</dbReference>
<dbReference type="PRINTS" id="PR00420">
    <property type="entry name" value="RNGMNOXGNASE"/>
</dbReference>
<dbReference type="SUPFAM" id="SSF51905">
    <property type="entry name" value="FAD/NAD(P)-binding domain"/>
    <property type="match status" value="1"/>
</dbReference>
<sequence>MTPATARDATERDATDTDVVIVGAGPVGLTLANILGLQGVRTMIVEERATLIDYPRGVGLDDEALRTFQAIGLVDKVLPHTVPNQILRFFDGNRRLLAEMAPPDARFGWPKRNGFVQPMVDAELHAGLARFPHVEVRWGHRMAECEETADGVTVRLDGDPTPVRARYLVGCDGGRSATRRLMGVSFDGTTSPTRWLVVDIANDPLGHPNSEVGADPARPYASISIAHGIRRFEFMIHADETDEQAEDPAFIHRMLGLLVPHPERVEVIRHRVYTHHSRIAGAFRKGRMFLAGDAAHLMPVWQGQGYNSGIRDAANLGWKLAAVVDGRAGDALLDTYDVERRKHARAMIDLSTMVGRVISPTNRRVAAVRDKLIRGASVVPTLKRYVLEMRFKPMPRYEQGAVFHPEAPSPTSPAGTLFIQPRVDTRDAQNVLLDEVLGTGFAVLCWNNNPRALLGADLFDRWKALGARFVAARPLTQLHWTGHDDPDVTVIGDRTGALKGWFDAHAESVLFLRPDRCIAGACIAQRAPEVSTALFGVLHLTQGGGNGHHGADRPVLHVAQSATEPSGTVAGTP</sequence>
<proteinExistence type="inferred from homology"/>
<name>MHPA_MYCSK</name>
<reference key="1">
    <citation type="submission" date="2006-12" db="EMBL/GenBank/DDBJ databases">
        <title>Complete sequence of chromosome of Mycobacterium sp. KMS.</title>
        <authorList>
            <consortium name="US DOE Joint Genome Institute"/>
            <person name="Copeland A."/>
            <person name="Lucas S."/>
            <person name="Lapidus A."/>
            <person name="Barry K."/>
            <person name="Detter J.C."/>
            <person name="Glavina del Rio T."/>
            <person name="Hammon N."/>
            <person name="Israni S."/>
            <person name="Dalin E."/>
            <person name="Tice H."/>
            <person name="Pitluck S."/>
            <person name="Kiss H."/>
            <person name="Brettin T."/>
            <person name="Bruce D."/>
            <person name="Han C."/>
            <person name="Tapia R."/>
            <person name="Gilna P."/>
            <person name="Schmutz J."/>
            <person name="Larimer F."/>
            <person name="Land M."/>
            <person name="Hauser L."/>
            <person name="Kyrpides N."/>
            <person name="Mikhailova N."/>
            <person name="Miller C.D."/>
            <person name="Richardson P."/>
        </authorList>
    </citation>
    <scope>NUCLEOTIDE SEQUENCE [LARGE SCALE GENOMIC DNA]</scope>
    <source>
        <strain>KMS</strain>
    </source>
</reference>
<feature type="chain" id="PRO_0000337639" description="3-(3-hydroxy-phenyl)propionate/3-hydroxycinnamic acid hydroxylase">
    <location>
        <begin position="1"/>
        <end position="573"/>
    </location>
</feature>
<feature type="binding site" evidence="1">
    <location>
        <begin position="18"/>
        <end position="47"/>
    </location>
    <ligand>
        <name>FAD</name>
        <dbReference type="ChEBI" id="CHEBI:57692"/>
    </ligand>
</feature>
<feature type="binding site" evidence="1">
    <location>
        <begin position="283"/>
        <end position="293"/>
    </location>
    <ligand>
        <name>FAD</name>
        <dbReference type="ChEBI" id="CHEBI:57692"/>
    </ligand>
</feature>
<protein>
    <recommendedName>
        <fullName evidence="1">3-(3-hydroxy-phenyl)propionate/3-hydroxycinnamic acid hydroxylase</fullName>
        <shortName evidence="1">3-HCI hydroxylase</shortName>
        <shortName evidence="1">3-HPP hydroxylase</shortName>
        <ecNumber evidence="1">1.14.13.127</ecNumber>
    </recommendedName>
</protein>
<gene>
    <name evidence="1" type="primary">mhpA</name>
    <name type="ordered locus">Mkms_3859</name>
</gene>